<sequence>MKTSIFKSLYVQVLTAIAIGILLGHFYPELGAQMKPFGDAFVKLIKMVIAPVIFCTVVTGIAGMESMKAVGRTGAVALLYFEVVSTIALIIGLIIVNVVQPGAGMNVDPSTLDAKAVAVYAEQAKDQGVVAFLLDVIPGSVIGAFASGNILQVLLFAVLFGFALHRLGSKGQLIFNVIESFSQVIFGIINMIMRLAPIGAFGAMAFTIGKYGVGTLVQLGQLIICFYITCILFVVVVLGSIARATGFSIFKFIRYIREELLIVLGTSSSESALPRMLDKMEKLGCRKSVVGLVIPTGYSFNLDGTSIYLTMAAVFIAQATNSHMDIFHQITLLVVLLLSSKGAAGVTGSGFIVLAATISAVGHLPVAGLALILGIDRFMSEARALTNLVGNGVATVVVAKWVKELDAKQMDDVLNNRVPANKTHELSS</sequence>
<comment type="function">
    <text evidence="1">Responsible for the transport of dicarboxylates such as succinate, fumarate, and malate from the periplasm across the membrane.</text>
</comment>
<comment type="subcellular location">
    <subcellularLocation>
        <location evidence="1">Cell inner membrane</location>
        <topology evidence="1">Multi-pass membrane protein</topology>
    </subcellularLocation>
</comment>
<comment type="similarity">
    <text evidence="1">Belongs to the dicarboxylate/amino acid:cation symporter (DAACS) (TC 2.A.23) family.</text>
</comment>
<proteinExistence type="inferred from homology"/>
<name>DCTA_KLEP7</name>
<keyword id="KW-0997">Cell inner membrane</keyword>
<keyword id="KW-1003">Cell membrane</keyword>
<keyword id="KW-0472">Membrane</keyword>
<keyword id="KW-0769">Symport</keyword>
<keyword id="KW-0812">Transmembrane</keyword>
<keyword id="KW-1133">Transmembrane helix</keyword>
<keyword id="KW-0813">Transport</keyword>
<reference key="1">
    <citation type="submission" date="2006-09" db="EMBL/GenBank/DDBJ databases">
        <authorList>
            <consortium name="The Klebsiella pneumonia Genome Sequencing Project"/>
            <person name="McClelland M."/>
            <person name="Sanderson E.K."/>
            <person name="Spieth J."/>
            <person name="Clifton W.S."/>
            <person name="Latreille P."/>
            <person name="Sabo A."/>
            <person name="Pepin K."/>
            <person name="Bhonagiri V."/>
            <person name="Porwollik S."/>
            <person name="Ali J."/>
            <person name="Wilson R.K."/>
        </authorList>
    </citation>
    <scope>NUCLEOTIDE SEQUENCE [LARGE SCALE GENOMIC DNA]</scope>
    <source>
        <strain>ATCC 700721 / MGH 78578</strain>
    </source>
</reference>
<protein>
    <recommendedName>
        <fullName evidence="1">C4-dicarboxylate transport protein</fullName>
    </recommendedName>
</protein>
<feature type="chain" id="PRO_1000067451" description="C4-dicarboxylate transport protein">
    <location>
        <begin position="1"/>
        <end position="428"/>
    </location>
</feature>
<feature type="transmembrane region" description="Helical" evidence="1">
    <location>
        <begin position="8"/>
        <end position="28"/>
    </location>
</feature>
<feature type="transmembrane region" description="Helical" evidence="1">
    <location>
        <begin position="44"/>
        <end position="64"/>
    </location>
</feature>
<feature type="transmembrane region" description="Helical" evidence="1">
    <location>
        <begin position="76"/>
        <end position="96"/>
    </location>
</feature>
<feature type="transmembrane region" description="Helical" evidence="1">
    <location>
        <begin position="142"/>
        <end position="162"/>
    </location>
</feature>
<feature type="transmembrane region" description="Helical" evidence="1">
    <location>
        <begin position="184"/>
        <end position="204"/>
    </location>
</feature>
<feature type="transmembrane region" description="Helical" evidence="1">
    <location>
        <begin position="222"/>
        <end position="242"/>
    </location>
</feature>
<feature type="transmembrane region" description="Helical" evidence="1">
    <location>
        <begin position="289"/>
        <end position="309"/>
    </location>
</feature>
<feature type="transmembrane region" description="Helical" evidence="1">
    <location>
        <begin position="326"/>
        <end position="346"/>
    </location>
</feature>
<feature type="transmembrane region" description="Helical" evidence="1">
    <location>
        <begin position="352"/>
        <end position="372"/>
    </location>
</feature>
<evidence type="ECO:0000255" key="1">
    <source>
        <dbReference type="HAMAP-Rule" id="MF_01300"/>
    </source>
</evidence>
<accession>A6TFD1</accession>
<gene>
    <name evidence="1" type="primary">dctA</name>
    <name type="ordered locus">KPN78578_38410</name>
    <name type="ORF">KPN_03878</name>
</gene>
<dbReference type="EMBL" id="CP000647">
    <property type="protein sequence ID" value="ABR79265.1"/>
    <property type="molecule type" value="Genomic_DNA"/>
</dbReference>
<dbReference type="RefSeq" id="WP_002921438.1">
    <property type="nucleotide sequence ID" value="NC_009648.1"/>
</dbReference>
<dbReference type="SMR" id="A6TFD1"/>
<dbReference type="STRING" id="272620.KPN_03878"/>
<dbReference type="PaxDb" id="272620-KPN_03878"/>
<dbReference type="EnsemblBacteria" id="ABR79265">
    <property type="protein sequence ID" value="ABR79265"/>
    <property type="gene ID" value="KPN_03878"/>
</dbReference>
<dbReference type="KEGG" id="kpn:KPN_03878"/>
<dbReference type="HOGENOM" id="CLU_019375_7_0_6"/>
<dbReference type="Proteomes" id="UP000000265">
    <property type="component" value="Chromosome"/>
</dbReference>
<dbReference type="GO" id="GO:0005886">
    <property type="term" value="C:plasma membrane"/>
    <property type="evidence" value="ECO:0007669"/>
    <property type="project" value="UniProtKB-SubCell"/>
</dbReference>
<dbReference type="GO" id="GO:0015138">
    <property type="term" value="F:fumarate transmembrane transporter activity"/>
    <property type="evidence" value="ECO:0007669"/>
    <property type="project" value="TreeGrafter"/>
</dbReference>
<dbReference type="GO" id="GO:0015366">
    <property type="term" value="F:malate:proton symporter activity"/>
    <property type="evidence" value="ECO:0007669"/>
    <property type="project" value="TreeGrafter"/>
</dbReference>
<dbReference type="GO" id="GO:0015141">
    <property type="term" value="F:succinate transmembrane transporter activity"/>
    <property type="evidence" value="ECO:0007669"/>
    <property type="project" value="TreeGrafter"/>
</dbReference>
<dbReference type="GO" id="GO:0070778">
    <property type="term" value="P:L-aspartate transmembrane transport"/>
    <property type="evidence" value="ECO:0007669"/>
    <property type="project" value="TreeGrafter"/>
</dbReference>
<dbReference type="FunFam" id="1.10.3860.10:FF:000001">
    <property type="entry name" value="C4-dicarboxylate transport protein"/>
    <property type="match status" value="1"/>
</dbReference>
<dbReference type="Gene3D" id="1.10.3860.10">
    <property type="entry name" value="Sodium:dicarboxylate symporter"/>
    <property type="match status" value="1"/>
</dbReference>
<dbReference type="HAMAP" id="MF_01300">
    <property type="entry name" value="C4_dicarb_transport"/>
    <property type="match status" value="1"/>
</dbReference>
<dbReference type="InterPro" id="IPR023954">
    <property type="entry name" value="C4_dicarb_transport"/>
</dbReference>
<dbReference type="InterPro" id="IPR001991">
    <property type="entry name" value="Na-dicarboxylate_symporter"/>
</dbReference>
<dbReference type="InterPro" id="IPR018107">
    <property type="entry name" value="Na-dicarboxylate_symporter_CS"/>
</dbReference>
<dbReference type="InterPro" id="IPR036458">
    <property type="entry name" value="Na:dicarbo_symporter_sf"/>
</dbReference>
<dbReference type="NCBIfam" id="NF002461">
    <property type="entry name" value="PRK01663.1"/>
    <property type="match status" value="1"/>
</dbReference>
<dbReference type="NCBIfam" id="NF009587">
    <property type="entry name" value="PRK13027.1"/>
    <property type="match status" value="1"/>
</dbReference>
<dbReference type="PANTHER" id="PTHR42865:SF1">
    <property type="entry name" value="AEROBIC C4-DICARBOXYLATE TRANSPORT PROTEIN"/>
    <property type="match status" value="1"/>
</dbReference>
<dbReference type="PANTHER" id="PTHR42865">
    <property type="entry name" value="PROTON/GLUTAMATE-ASPARTATE SYMPORTER"/>
    <property type="match status" value="1"/>
</dbReference>
<dbReference type="Pfam" id="PF00375">
    <property type="entry name" value="SDF"/>
    <property type="match status" value="1"/>
</dbReference>
<dbReference type="PRINTS" id="PR00173">
    <property type="entry name" value="EDTRNSPORT"/>
</dbReference>
<dbReference type="SUPFAM" id="SSF118215">
    <property type="entry name" value="Proton glutamate symport protein"/>
    <property type="match status" value="1"/>
</dbReference>
<dbReference type="PROSITE" id="PS00713">
    <property type="entry name" value="NA_DICARBOXYL_SYMP_1"/>
    <property type="match status" value="1"/>
</dbReference>
<dbReference type="PROSITE" id="PS00714">
    <property type="entry name" value="NA_DICARBOXYL_SYMP_2"/>
    <property type="match status" value="1"/>
</dbReference>
<organism>
    <name type="scientific">Klebsiella pneumoniae subsp. pneumoniae (strain ATCC 700721 / MGH 78578)</name>
    <dbReference type="NCBI Taxonomy" id="272620"/>
    <lineage>
        <taxon>Bacteria</taxon>
        <taxon>Pseudomonadati</taxon>
        <taxon>Pseudomonadota</taxon>
        <taxon>Gammaproteobacteria</taxon>
        <taxon>Enterobacterales</taxon>
        <taxon>Enterobacteriaceae</taxon>
        <taxon>Klebsiella/Raoultella group</taxon>
        <taxon>Klebsiella</taxon>
        <taxon>Klebsiella pneumoniae complex</taxon>
    </lineage>
</organism>